<evidence type="ECO:0000255" key="1">
    <source>
        <dbReference type="HAMAP-Rule" id="MF_00194"/>
    </source>
</evidence>
<accession>Q7N0G0</accession>
<gene>
    <name evidence="1" type="primary">rdgC</name>
    <name type="ordered locus">plu3929</name>
</gene>
<keyword id="KW-0963">Cytoplasm</keyword>
<keyword id="KW-0233">DNA recombination</keyword>
<keyword id="KW-1185">Reference proteome</keyword>
<dbReference type="EMBL" id="BX571872">
    <property type="protein sequence ID" value="CAE16301.1"/>
    <property type="molecule type" value="Genomic_DNA"/>
</dbReference>
<dbReference type="RefSeq" id="WP_011148063.1">
    <property type="nucleotide sequence ID" value="NC_005126.1"/>
</dbReference>
<dbReference type="SMR" id="Q7N0G0"/>
<dbReference type="STRING" id="243265.plu3929"/>
<dbReference type="GeneID" id="48850155"/>
<dbReference type="KEGG" id="plu:plu3929"/>
<dbReference type="eggNOG" id="COG2974">
    <property type="taxonomic scope" value="Bacteria"/>
</dbReference>
<dbReference type="HOGENOM" id="CLU_052038_1_1_6"/>
<dbReference type="OrthoDB" id="5290530at2"/>
<dbReference type="Proteomes" id="UP000002514">
    <property type="component" value="Chromosome"/>
</dbReference>
<dbReference type="GO" id="GO:0043590">
    <property type="term" value="C:bacterial nucleoid"/>
    <property type="evidence" value="ECO:0007669"/>
    <property type="project" value="TreeGrafter"/>
</dbReference>
<dbReference type="GO" id="GO:0005737">
    <property type="term" value="C:cytoplasm"/>
    <property type="evidence" value="ECO:0007669"/>
    <property type="project" value="UniProtKB-UniRule"/>
</dbReference>
<dbReference type="GO" id="GO:0003690">
    <property type="term" value="F:double-stranded DNA binding"/>
    <property type="evidence" value="ECO:0007669"/>
    <property type="project" value="TreeGrafter"/>
</dbReference>
<dbReference type="GO" id="GO:0006310">
    <property type="term" value="P:DNA recombination"/>
    <property type="evidence" value="ECO:0007669"/>
    <property type="project" value="UniProtKB-UniRule"/>
</dbReference>
<dbReference type="GO" id="GO:0000018">
    <property type="term" value="P:regulation of DNA recombination"/>
    <property type="evidence" value="ECO:0007669"/>
    <property type="project" value="TreeGrafter"/>
</dbReference>
<dbReference type="HAMAP" id="MF_00194">
    <property type="entry name" value="RdgC"/>
    <property type="match status" value="1"/>
</dbReference>
<dbReference type="InterPro" id="IPR007476">
    <property type="entry name" value="RdgC"/>
</dbReference>
<dbReference type="NCBIfam" id="NF001460">
    <property type="entry name" value="PRK00321.1-1"/>
    <property type="match status" value="1"/>
</dbReference>
<dbReference type="NCBIfam" id="NF001462">
    <property type="entry name" value="PRK00321.1-3"/>
    <property type="match status" value="1"/>
</dbReference>
<dbReference type="NCBIfam" id="NF001464">
    <property type="entry name" value="PRK00321.1-5"/>
    <property type="match status" value="1"/>
</dbReference>
<dbReference type="PANTHER" id="PTHR38103">
    <property type="entry name" value="RECOMBINATION-ASSOCIATED PROTEIN RDGC"/>
    <property type="match status" value="1"/>
</dbReference>
<dbReference type="PANTHER" id="PTHR38103:SF1">
    <property type="entry name" value="RECOMBINATION-ASSOCIATED PROTEIN RDGC"/>
    <property type="match status" value="1"/>
</dbReference>
<dbReference type="Pfam" id="PF04381">
    <property type="entry name" value="RdgC"/>
    <property type="match status" value="1"/>
</dbReference>
<protein>
    <recommendedName>
        <fullName evidence="1">Recombination-associated protein RdgC</fullName>
    </recommendedName>
</protein>
<comment type="function">
    <text evidence="1">May be involved in recombination.</text>
</comment>
<comment type="subcellular location">
    <subcellularLocation>
        <location evidence="1">Cytoplasm</location>
        <location evidence="1">Nucleoid</location>
    </subcellularLocation>
</comment>
<comment type="similarity">
    <text evidence="1">Belongs to the RdgC family.</text>
</comment>
<organism>
    <name type="scientific">Photorhabdus laumondii subsp. laumondii (strain DSM 15139 / CIP 105565 / TT01)</name>
    <name type="common">Photorhabdus luminescens subsp. laumondii</name>
    <dbReference type="NCBI Taxonomy" id="243265"/>
    <lineage>
        <taxon>Bacteria</taxon>
        <taxon>Pseudomonadati</taxon>
        <taxon>Pseudomonadota</taxon>
        <taxon>Gammaproteobacteria</taxon>
        <taxon>Enterobacterales</taxon>
        <taxon>Morganellaceae</taxon>
        <taxon>Photorhabdus</taxon>
    </lineage>
</organism>
<name>RDGC_PHOLL</name>
<sequence>MLWFKNLMIYRLNRETSLSADELEKQLSPLAFTPCGSQDMAKTGWVPPMGSHSDAFTHVANNQILICARKEEKMLPSPVIKQALQAKIEKLEGEQHRKLKKTEKDSLKDEILHTLLPRAFSRFSQTYIWIDIANNLIVIDAASAKRAEDNLALLRKSLGSLPVVPLTFKNPIELTLTEWVRSGALPTGFALMDEAELKAILEEGGVIRCKKQDLVSDEIATHIEAGKCVTKLALDWEERIQFMLSDDGTFKRIKFSDTLREQNDDIDREDFAQRFDADFILMTGELSALINSTIEALGGEAEK</sequence>
<proteinExistence type="inferred from homology"/>
<reference key="1">
    <citation type="journal article" date="2003" name="Nat. Biotechnol.">
        <title>The genome sequence of the entomopathogenic bacterium Photorhabdus luminescens.</title>
        <authorList>
            <person name="Duchaud E."/>
            <person name="Rusniok C."/>
            <person name="Frangeul L."/>
            <person name="Buchrieser C."/>
            <person name="Givaudan A."/>
            <person name="Taourit S."/>
            <person name="Bocs S."/>
            <person name="Boursaux-Eude C."/>
            <person name="Chandler M."/>
            <person name="Charles J.-F."/>
            <person name="Dassa E."/>
            <person name="Derose R."/>
            <person name="Derzelle S."/>
            <person name="Freyssinet G."/>
            <person name="Gaudriault S."/>
            <person name="Medigue C."/>
            <person name="Lanois A."/>
            <person name="Powell K."/>
            <person name="Siguier P."/>
            <person name="Vincent R."/>
            <person name="Wingate V."/>
            <person name="Zouine M."/>
            <person name="Glaser P."/>
            <person name="Boemare N."/>
            <person name="Danchin A."/>
            <person name="Kunst F."/>
        </authorList>
    </citation>
    <scope>NUCLEOTIDE SEQUENCE [LARGE SCALE GENOMIC DNA]</scope>
    <source>
        <strain>DSM 15139 / CIP 105565 / TT01</strain>
    </source>
</reference>
<feature type="chain" id="PRO_1000021214" description="Recombination-associated protein RdgC">
    <location>
        <begin position="1"/>
        <end position="303"/>
    </location>
</feature>